<organism>
    <name type="scientific">Influenza A virus (strain A/Niigata/137/1996 H3N2)</name>
    <dbReference type="NCBI Taxonomy" id="109049"/>
    <lineage>
        <taxon>Viruses</taxon>
        <taxon>Riboviria</taxon>
        <taxon>Orthornavirae</taxon>
        <taxon>Negarnaviricota</taxon>
        <taxon>Polyploviricotina</taxon>
        <taxon>Insthoviricetes</taxon>
        <taxon>Articulavirales</taxon>
        <taxon>Orthomyxoviridae</taxon>
        <taxon>Alphainfluenzavirus</taxon>
        <taxon>Alphainfluenzavirus influenzae</taxon>
        <taxon>Influenza A virus</taxon>
    </lineage>
</organism>
<evidence type="ECO:0000255" key="1">
    <source>
        <dbReference type="HAMAP-Rule" id="MF_04071"/>
    </source>
</evidence>
<dbReference type="EC" id="3.2.1.18" evidence="1"/>
<dbReference type="EMBL" id="AF038262">
    <property type="protein sequence ID" value="AAC63470.1"/>
    <property type="molecule type" value="Genomic_RNA"/>
</dbReference>
<dbReference type="SMR" id="O91745"/>
<dbReference type="CAZy" id="GH34">
    <property type="family name" value="Glycoside Hydrolase Family 34"/>
</dbReference>
<dbReference type="GlyCosmos" id="O91745">
    <property type="glycosylation" value="8 sites, No reported glycans"/>
</dbReference>
<dbReference type="GO" id="GO:0020002">
    <property type="term" value="C:host cell plasma membrane"/>
    <property type="evidence" value="ECO:0007669"/>
    <property type="project" value="UniProtKB-SubCell"/>
</dbReference>
<dbReference type="GO" id="GO:0016020">
    <property type="term" value="C:membrane"/>
    <property type="evidence" value="ECO:0007669"/>
    <property type="project" value="UniProtKB-UniRule"/>
</dbReference>
<dbReference type="GO" id="GO:0055036">
    <property type="term" value="C:virion membrane"/>
    <property type="evidence" value="ECO:0007669"/>
    <property type="project" value="UniProtKB-SubCell"/>
</dbReference>
<dbReference type="GO" id="GO:0004308">
    <property type="term" value="F:exo-alpha-sialidase activity"/>
    <property type="evidence" value="ECO:0007669"/>
    <property type="project" value="UniProtKB-UniRule"/>
</dbReference>
<dbReference type="GO" id="GO:0046872">
    <property type="term" value="F:metal ion binding"/>
    <property type="evidence" value="ECO:0007669"/>
    <property type="project" value="UniProtKB-UniRule"/>
</dbReference>
<dbReference type="GO" id="GO:0005975">
    <property type="term" value="P:carbohydrate metabolic process"/>
    <property type="evidence" value="ECO:0007669"/>
    <property type="project" value="InterPro"/>
</dbReference>
<dbReference type="GO" id="GO:0046761">
    <property type="term" value="P:viral budding from plasma membrane"/>
    <property type="evidence" value="ECO:0007669"/>
    <property type="project" value="UniProtKB-UniRule"/>
</dbReference>
<dbReference type="CDD" id="cd15483">
    <property type="entry name" value="Influenza_NA"/>
    <property type="match status" value="1"/>
</dbReference>
<dbReference type="Gene3D" id="2.120.10.10">
    <property type="match status" value="1"/>
</dbReference>
<dbReference type="HAMAP" id="MF_04071">
    <property type="entry name" value="INFV_NRAM"/>
    <property type="match status" value="1"/>
</dbReference>
<dbReference type="InterPro" id="IPR001860">
    <property type="entry name" value="Glyco_hydro_34"/>
</dbReference>
<dbReference type="InterPro" id="IPR033654">
    <property type="entry name" value="Sialidase_Influenza_A/B"/>
</dbReference>
<dbReference type="InterPro" id="IPR036278">
    <property type="entry name" value="Sialidase_sf"/>
</dbReference>
<dbReference type="Pfam" id="PF00064">
    <property type="entry name" value="Neur"/>
    <property type="match status" value="1"/>
</dbReference>
<dbReference type="SUPFAM" id="SSF50939">
    <property type="entry name" value="Sialidases"/>
    <property type="match status" value="1"/>
</dbReference>
<comment type="function">
    <text evidence="1">Catalyzes the removal of terminal sialic acid residues from viral and cellular glycoconjugates. Cleaves off the terminal sialic acids on the glycosylated HA during virus budding to facilitate virus release. Additionally helps virus spread through the circulation by further removing sialic acids from the cell surface. These cleavages prevent self-aggregation and ensure the efficient spread of the progeny virus from cell to cell. Otherwise, infection would be limited to one round of replication. Described as a receptor-destroying enzyme because it cleaves a terminal sialic acid from the cellular receptors. May facilitate viral invasion of the upper airways by cleaving the sialic acid moieties on the mucin of the airway epithelial cells. Likely to plays a role in the budding process through its association with lipid rafts during intracellular transport. May additionally display a raft-association independent effect on budding. Plays a role in the determination of host range restriction on replication and virulence. Sialidase activity in late endosome/lysosome traffic seems to enhance virus replication.</text>
</comment>
<comment type="catalytic activity">
    <reaction evidence="1">
        <text>Hydrolysis of alpha-(2-&gt;3)-, alpha-(2-&gt;6)-, alpha-(2-&gt;8)- glycosidic linkages of terminal sialic acid residues in oligosaccharides, glycoproteins, glycolipids, colominic acid and synthetic substrates.</text>
        <dbReference type="EC" id="3.2.1.18"/>
    </reaction>
</comment>
<comment type="cofactor">
    <cofactor evidence="1">
        <name>Ca(2+)</name>
        <dbReference type="ChEBI" id="CHEBI:29108"/>
    </cofactor>
</comment>
<comment type="activity regulation">
    <text evidence="1">Inhibited by the neuraminidase inhibitors zanamivir (Relenza) and oseltamivir (Tamiflu). These drugs interfere with the release of progeny virus from infected cells and are effective against all influenza strains. Resistance to neuraminidase inhibitors is quite rare.</text>
</comment>
<comment type="subunit">
    <text evidence="1">Homotetramer.</text>
</comment>
<comment type="subcellular location">
    <subcellularLocation>
        <location evidence="1">Virion membrane</location>
    </subcellularLocation>
    <subcellularLocation>
        <location evidence="1">Host apical cell membrane</location>
        <topology evidence="1">Single-pass type II membrane protein</topology>
    </subcellularLocation>
    <text evidence="1">Preferentially accumulates at the apical plasma membrane in infected polarized epithelial cells, which is the virus assembly site. Uses lipid rafts for cell surface transport and apical sorting. In the virion, forms a mushroom-shaped spike on the surface of the membrane.</text>
</comment>
<comment type="domain">
    <text evidence="1">Intact N-terminus is essential for virion morphogenesis. Possesses two apical sorting signals, one in the ectodomain, which is likely to be a glycan, and the other in the transmembrane domain. The transmembrane domain also plays a role in lipid raft association.</text>
</comment>
<comment type="PTM">
    <text evidence="1">N-glycosylated.</text>
</comment>
<comment type="miscellaneous">
    <text>The influenza A genome consist of 8 RNA segments. Genetic variation of hemagglutinin and/or neuraminidase genes results in the emergence of new influenza strains. The mechanism of variation can be the result of point mutations or the result of genetic reassortment between segments of two different strains.</text>
</comment>
<comment type="similarity">
    <text evidence="1">Belongs to the glycosyl hydrolase 34 family.</text>
</comment>
<organismHost>
    <name type="scientific">Aves</name>
    <dbReference type="NCBI Taxonomy" id="8782"/>
</organismHost>
<organismHost>
    <name type="scientific">Cetacea</name>
    <name type="common">whales</name>
    <dbReference type="NCBI Taxonomy" id="9721"/>
</organismHost>
<organismHost>
    <name type="scientific">Homo sapiens</name>
    <name type="common">Human</name>
    <dbReference type="NCBI Taxonomy" id="9606"/>
</organismHost>
<organismHost>
    <name type="scientific">Phocidae</name>
    <name type="common">true seals</name>
    <dbReference type="NCBI Taxonomy" id="9709"/>
</organismHost>
<organismHost>
    <name type="scientific">Sus scrofa</name>
    <name type="common">Pig</name>
    <dbReference type="NCBI Taxonomy" id="9823"/>
</organismHost>
<proteinExistence type="inferred from homology"/>
<name>NRAM_I96A1</name>
<keyword id="KW-0106">Calcium</keyword>
<keyword id="KW-1015">Disulfide bond</keyword>
<keyword id="KW-0325">Glycoprotein</keyword>
<keyword id="KW-0326">Glycosidase</keyword>
<keyword id="KW-1032">Host cell membrane</keyword>
<keyword id="KW-1043">Host membrane</keyword>
<keyword id="KW-0378">Hydrolase</keyword>
<keyword id="KW-0472">Membrane</keyword>
<keyword id="KW-0479">Metal-binding</keyword>
<keyword id="KW-0735">Signal-anchor</keyword>
<keyword id="KW-0812">Transmembrane</keyword>
<keyword id="KW-1133">Transmembrane helix</keyword>
<keyword id="KW-0946">Virion</keyword>
<feature type="chain" id="PRO_0000078709" description="Neuraminidase">
    <location>
        <begin position="1"/>
        <end position="469"/>
    </location>
</feature>
<feature type="topological domain" description="Intravirion" evidence="1">
    <location>
        <begin position="1"/>
        <end position="9"/>
    </location>
</feature>
<feature type="transmembrane region" description="Helical" evidence="1">
    <location>
        <begin position="10"/>
        <end position="30"/>
    </location>
</feature>
<feature type="topological domain" description="Virion surface" evidence="1">
    <location>
        <begin position="31"/>
        <end position="469"/>
    </location>
</feature>
<feature type="region of interest" description="Involved in apical transport and lipid raft association" evidence="1">
    <location>
        <begin position="11"/>
        <end position="33"/>
    </location>
</feature>
<feature type="region of interest" description="Hypervariable stalk region" evidence="1">
    <location>
        <begin position="36"/>
        <end position="88"/>
    </location>
</feature>
<feature type="region of interest" description="Head of neuraminidase" evidence="1">
    <location>
        <begin position="91"/>
        <end position="469"/>
    </location>
</feature>
<feature type="active site" description="Proton donor/acceptor" evidence="1">
    <location>
        <position position="151"/>
    </location>
</feature>
<feature type="active site" description="Nucleophile" evidence="1">
    <location>
        <position position="406"/>
    </location>
</feature>
<feature type="binding site" evidence="1">
    <location>
        <position position="118"/>
    </location>
    <ligand>
        <name>substrate</name>
    </ligand>
</feature>
<feature type="binding site" evidence="1">
    <location>
        <position position="152"/>
    </location>
    <ligand>
        <name>substrate</name>
    </ligand>
</feature>
<feature type="binding site" evidence="1">
    <location>
        <begin position="276"/>
        <end position="277"/>
    </location>
    <ligand>
        <name>substrate</name>
    </ligand>
</feature>
<feature type="binding site" evidence="1">
    <location>
        <position position="292"/>
    </location>
    <ligand>
        <name>substrate</name>
    </ligand>
</feature>
<feature type="binding site" evidence="1">
    <location>
        <position position="293"/>
    </location>
    <ligand>
        <name>Ca(2+)</name>
        <dbReference type="ChEBI" id="CHEBI:29108"/>
    </ligand>
</feature>
<feature type="binding site" evidence="1">
    <location>
        <position position="297"/>
    </location>
    <ligand>
        <name>Ca(2+)</name>
        <dbReference type="ChEBI" id="CHEBI:29108"/>
    </ligand>
</feature>
<feature type="binding site" evidence="1">
    <location>
        <position position="324"/>
    </location>
    <ligand>
        <name>Ca(2+)</name>
        <dbReference type="ChEBI" id="CHEBI:29108"/>
    </ligand>
</feature>
<feature type="binding site" evidence="1">
    <location>
        <position position="371"/>
    </location>
    <ligand>
        <name>substrate</name>
    </ligand>
</feature>
<feature type="glycosylation site" description="N-linked (GlcNAc...) asparagine; by host" evidence="1">
    <location>
        <position position="61"/>
    </location>
</feature>
<feature type="glycosylation site" description="N-linked (GlcNAc...) asparagine; by host" evidence="1">
    <location>
        <position position="70"/>
    </location>
</feature>
<feature type="glycosylation site" description="N-linked (GlcNAc...) asparagine; by host" evidence="1">
    <location>
        <position position="86"/>
    </location>
</feature>
<feature type="glycosylation site" description="N-linked (GlcNAc...) asparagine; by host" evidence="1">
    <location>
        <position position="146"/>
    </location>
</feature>
<feature type="glycosylation site" description="N-linked (GlcNAc...) asparagine; by host" evidence="1">
    <location>
        <position position="200"/>
    </location>
</feature>
<feature type="glycosylation site" description="N-linked (GlcNAc...) asparagine; by host" evidence="1">
    <location>
        <position position="234"/>
    </location>
</feature>
<feature type="glycosylation site" description="N-linked (GlcNAc...) asparagine; by host" evidence="1">
    <location>
        <position position="329"/>
    </location>
</feature>
<feature type="glycosylation site" description="N-linked (GlcNAc...) asparagine; by host" evidence="1">
    <location>
        <position position="402"/>
    </location>
</feature>
<feature type="disulfide bond" evidence="1">
    <location>
        <begin position="92"/>
        <end position="417"/>
    </location>
</feature>
<feature type="disulfide bond" evidence="1">
    <location>
        <begin position="124"/>
        <end position="129"/>
    </location>
</feature>
<feature type="disulfide bond" evidence="1">
    <location>
        <begin position="183"/>
        <end position="230"/>
    </location>
</feature>
<feature type="disulfide bond" evidence="1">
    <location>
        <begin position="232"/>
        <end position="237"/>
    </location>
</feature>
<feature type="disulfide bond" evidence="1">
    <location>
        <begin position="278"/>
        <end position="291"/>
    </location>
</feature>
<feature type="disulfide bond" evidence="1">
    <location>
        <begin position="280"/>
        <end position="289"/>
    </location>
</feature>
<feature type="disulfide bond" evidence="1">
    <location>
        <begin position="318"/>
        <end position="337"/>
    </location>
</feature>
<feature type="disulfide bond" evidence="1">
    <location>
        <begin position="421"/>
        <end position="447"/>
    </location>
</feature>
<gene>
    <name evidence="1" type="primary">NA</name>
</gene>
<reference key="1">
    <citation type="journal article" date="1998" name="J. Virol.">
        <title>Phylogenetic analysis of the entire genome of influenza A (H3N2) viruses from Japan: evidence for genetic reassortment of the six internal genes.</title>
        <authorList>
            <person name="Lindstrom S.E."/>
            <person name="Hiromoto Y."/>
            <person name="Nerome R."/>
            <person name="Omoe K."/>
            <person name="Sugita S."/>
            <person name="Yamazaki Y."/>
            <person name="Takahashi T."/>
            <person name="Nerome K."/>
        </authorList>
    </citation>
    <scope>NUCLEOTIDE SEQUENCE [GENOMIC RNA]</scope>
</reference>
<reference key="2">
    <citation type="journal article" date="2004" name="Virus Res.">
        <title>Assembly and budding of influenza virus.</title>
        <authorList>
            <person name="Nayak D.P."/>
            <person name="Hui E.K."/>
            <person name="Barman S."/>
        </authorList>
    </citation>
    <scope>REVIEW</scope>
</reference>
<reference key="3">
    <citation type="journal article" date="2005" name="N. Engl. J. Med.">
        <title>Neuraminidase inhibitors for influenza.</title>
        <authorList>
            <person name="Moscona A."/>
        </authorList>
    </citation>
    <scope>REVIEW</scope>
</reference>
<reference key="4">
    <citation type="journal article" date="2005" name="Biol. Pharm. Bull.">
        <title>Sialobiology of influenza: molecular mechanism of host range variation of influenza viruses.</title>
        <authorList>
            <person name="Suzuki Y."/>
        </authorList>
    </citation>
    <scope>REVIEW</scope>
</reference>
<sequence length="469" mass="52021">MNPNQKIITIGSVSLTIATICFLMQIAILVTTVTLHFKQYECNSPPNNQVMLCEPTIIERNITEIVYLTNTTIEKEICPKLAEYRNWSKPQCKITGFAPFSKDNSIRLSAGGDIWVTREPYVSCDPDKCYQFALGQGTTLNNRHSNDTVHDRTPYRTLLMNELGVPFHLGTKQVCIAWSSSSCHDGKAWLHVCVTGHDENATASFIYDGRLVDSIGSWSKKILRTQESECVCINGTCTVVMTDGSASGRADTKILFIEEGKIVHISPLSGSAQHVEECSCYPRYSGVRCVCRDNWKGSNRPIVDINVKDYSIVSSYVCSGLVGDTPRKNDSSSSSHCLNPNNEEGGHGVKGWAFDDGNDVWMGRTISEKLRSGYETFKVIGGWSKPNSKLQINRQVIVDRGNRSGYSGIFSVEGKSCINRCFYVELIRGRKQETEVWWTSNSIVVFCGTSGTYGTGSWPDGADINLMPI</sequence>
<protein>
    <recommendedName>
        <fullName evidence="1">Neuraminidase</fullName>
        <ecNumber evidence="1">3.2.1.18</ecNumber>
    </recommendedName>
</protein>
<accession>O91745</accession>